<name>PLSY_GEOKA</name>
<keyword id="KW-1003">Cell membrane</keyword>
<keyword id="KW-0444">Lipid biosynthesis</keyword>
<keyword id="KW-0443">Lipid metabolism</keyword>
<keyword id="KW-0472">Membrane</keyword>
<keyword id="KW-0594">Phospholipid biosynthesis</keyword>
<keyword id="KW-1208">Phospholipid metabolism</keyword>
<keyword id="KW-1185">Reference proteome</keyword>
<keyword id="KW-0808">Transferase</keyword>
<keyword id="KW-0812">Transmembrane</keyword>
<keyword id="KW-1133">Transmembrane helix</keyword>
<accession>Q5KZ35</accession>
<reference key="1">
    <citation type="journal article" date="2004" name="Nucleic Acids Res.">
        <title>Thermoadaptation trait revealed by the genome sequence of thermophilic Geobacillus kaustophilus.</title>
        <authorList>
            <person name="Takami H."/>
            <person name="Takaki Y."/>
            <person name="Chee G.-J."/>
            <person name="Nishi S."/>
            <person name="Shimamura S."/>
            <person name="Suzuki H."/>
            <person name="Matsui S."/>
            <person name="Uchiyama I."/>
        </authorList>
    </citation>
    <scope>NUCLEOTIDE SEQUENCE [LARGE SCALE GENOMIC DNA]</scope>
    <source>
        <strain>HTA426</strain>
    </source>
</reference>
<gene>
    <name evidence="1" type="primary">plsY</name>
    <name type="ordered locus">GK1766</name>
</gene>
<feature type="chain" id="PRO_0000188373" description="Glycerol-3-phosphate acyltransferase">
    <location>
        <begin position="1"/>
        <end position="197"/>
    </location>
</feature>
<feature type="transmembrane region" description="Helical" evidence="1">
    <location>
        <begin position="1"/>
        <end position="21"/>
    </location>
</feature>
<feature type="transmembrane region" description="Helical" evidence="1">
    <location>
        <begin position="69"/>
        <end position="89"/>
    </location>
</feature>
<feature type="transmembrane region" description="Helical" evidence="1">
    <location>
        <begin position="110"/>
        <end position="130"/>
    </location>
</feature>
<feature type="transmembrane region" description="Helical" evidence="1">
    <location>
        <begin position="152"/>
        <end position="172"/>
    </location>
</feature>
<evidence type="ECO:0000255" key="1">
    <source>
        <dbReference type="HAMAP-Rule" id="MF_01043"/>
    </source>
</evidence>
<protein>
    <recommendedName>
        <fullName evidence="1">Glycerol-3-phosphate acyltransferase</fullName>
    </recommendedName>
    <alternativeName>
        <fullName evidence="1">Acyl-PO4 G3P acyltransferase</fullName>
    </alternativeName>
    <alternativeName>
        <fullName evidence="1">Acyl-phosphate--glycerol-3-phosphate acyltransferase</fullName>
    </alternativeName>
    <alternativeName>
        <fullName evidence="1">G3P acyltransferase</fullName>
        <shortName evidence="1">GPAT</shortName>
        <ecNumber evidence="1">2.3.1.275</ecNumber>
    </alternativeName>
    <alternativeName>
        <fullName evidence="1">Lysophosphatidic acid synthase</fullName>
        <shortName evidence="1">LPA synthase</shortName>
    </alternativeName>
</protein>
<sequence length="197" mass="21049">MTALILLLAYLLGSIPFGLLVGKIGYGIDIREHGSGNLGGTNTFRVLGAKAGTIVIVGDMLKGTLAASLPMLFSVPVHPLLAGAIAVVGHMYPVFAKFRGGKAVATSGGVMLFYSPLFFLSLIAVFLVVLAVSRYVSLSSMAAALYAVVYTVFFTDDIPLTVAVLLLASFIFYRHRANIQRILNKTEPKVKWPGKRS</sequence>
<proteinExistence type="inferred from homology"/>
<comment type="function">
    <text evidence="1">Catalyzes the transfer of an acyl group from acyl-phosphate (acyl-PO(4)) to glycerol-3-phosphate (G3P) to form lysophosphatidic acid (LPA). This enzyme utilizes acyl-phosphate as fatty acyl donor, but not acyl-CoA or acyl-ACP.</text>
</comment>
<comment type="catalytic activity">
    <reaction evidence="1">
        <text>an acyl phosphate + sn-glycerol 3-phosphate = a 1-acyl-sn-glycero-3-phosphate + phosphate</text>
        <dbReference type="Rhea" id="RHEA:34075"/>
        <dbReference type="ChEBI" id="CHEBI:43474"/>
        <dbReference type="ChEBI" id="CHEBI:57597"/>
        <dbReference type="ChEBI" id="CHEBI:57970"/>
        <dbReference type="ChEBI" id="CHEBI:59918"/>
        <dbReference type="EC" id="2.3.1.275"/>
    </reaction>
</comment>
<comment type="pathway">
    <text evidence="1">Lipid metabolism; phospholipid metabolism.</text>
</comment>
<comment type="subunit">
    <text evidence="1">Probably interacts with PlsX.</text>
</comment>
<comment type="subcellular location">
    <subcellularLocation>
        <location evidence="1">Cell membrane</location>
        <topology evidence="1">Multi-pass membrane protein</topology>
    </subcellularLocation>
</comment>
<comment type="similarity">
    <text evidence="1">Belongs to the PlsY family.</text>
</comment>
<dbReference type="EC" id="2.3.1.275" evidence="1"/>
<dbReference type="EMBL" id="BA000043">
    <property type="protein sequence ID" value="BAD76051.1"/>
    <property type="molecule type" value="Genomic_DNA"/>
</dbReference>
<dbReference type="RefSeq" id="WP_011231258.1">
    <property type="nucleotide sequence ID" value="NC_006510.1"/>
</dbReference>
<dbReference type="SMR" id="Q5KZ35"/>
<dbReference type="STRING" id="235909.GK1766"/>
<dbReference type="GeneID" id="32063648"/>
<dbReference type="KEGG" id="gka:GK1766"/>
<dbReference type="eggNOG" id="COG0344">
    <property type="taxonomic scope" value="Bacteria"/>
</dbReference>
<dbReference type="HOGENOM" id="CLU_081254_4_0_9"/>
<dbReference type="UniPathway" id="UPA00085"/>
<dbReference type="Proteomes" id="UP000001172">
    <property type="component" value="Chromosome"/>
</dbReference>
<dbReference type="GO" id="GO:0005886">
    <property type="term" value="C:plasma membrane"/>
    <property type="evidence" value="ECO:0007669"/>
    <property type="project" value="UniProtKB-SubCell"/>
</dbReference>
<dbReference type="GO" id="GO:0043772">
    <property type="term" value="F:acyl-phosphate glycerol-3-phosphate acyltransferase activity"/>
    <property type="evidence" value="ECO:0007669"/>
    <property type="project" value="UniProtKB-UniRule"/>
</dbReference>
<dbReference type="GO" id="GO:0008654">
    <property type="term" value="P:phospholipid biosynthetic process"/>
    <property type="evidence" value="ECO:0007669"/>
    <property type="project" value="UniProtKB-UniRule"/>
</dbReference>
<dbReference type="HAMAP" id="MF_01043">
    <property type="entry name" value="PlsY"/>
    <property type="match status" value="1"/>
</dbReference>
<dbReference type="InterPro" id="IPR003811">
    <property type="entry name" value="G3P_acylTferase_PlsY"/>
</dbReference>
<dbReference type="NCBIfam" id="TIGR00023">
    <property type="entry name" value="glycerol-3-phosphate 1-O-acyltransferase PlsY"/>
    <property type="match status" value="1"/>
</dbReference>
<dbReference type="PANTHER" id="PTHR30309:SF0">
    <property type="entry name" value="GLYCEROL-3-PHOSPHATE ACYLTRANSFERASE-RELATED"/>
    <property type="match status" value="1"/>
</dbReference>
<dbReference type="PANTHER" id="PTHR30309">
    <property type="entry name" value="INNER MEMBRANE PROTEIN YGIH"/>
    <property type="match status" value="1"/>
</dbReference>
<dbReference type="Pfam" id="PF02660">
    <property type="entry name" value="G3P_acyltransf"/>
    <property type="match status" value="1"/>
</dbReference>
<dbReference type="SMART" id="SM01207">
    <property type="entry name" value="G3P_acyltransf"/>
    <property type="match status" value="1"/>
</dbReference>
<organism>
    <name type="scientific">Geobacillus kaustophilus (strain HTA426)</name>
    <dbReference type="NCBI Taxonomy" id="235909"/>
    <lineage>
        <taxon>Bacteria</taxon>
        <taxon>Bacillati</taxon>
        <taxon>Bacillota</taxon>
        <taxon>Bacilli</taxon>
        <taxon>Bacillales</taxon>
        <taxon>Anoxybacillaceae</taxon>
        <taxon>Geobacillus</taxon>
        <taxon>Geobacillus thermoleovorans group</taxon>
    </lineage>
</organism>